<feature type="chain" id="PRO_1000193968" description="Large ribosomal subunit protein bL20">
    <location>
        <begin position="1"/>
        <end position="119"/>
    </location>
</feature>
<keyword id="KW-1185">Reference proteome</keyword>
<keyword id="KW-0687">Ribonucleoprotein</keyword>
<keyword id="KW-0689">Ribosomal protein</keyword>
<keyword id="KW-0694">RNA-binding</keyword>
<keyword id="KW-0699">rRNA-binding</keyword>
<gene>
    <name evidence="1" type="primary">rplT</name>
    <name type="ordered locus">Msil_1836</name>
</gene>
<name>RL20_METSB</name>
<evidence type="ECO:0000255" key="1">
    <source>
        <dbReference type="HAMAP-Rule" id="MF_00382"/>
    </source>
</evidence>
<evidence type="ECO:0000305" key="2"/>
<accession>B8EM00</accession>
<dbReference type="EMBL" id="CP001280">
    <property type="protein sequence ID" value="ACK50781.1"/>
    <property type="molecule type" value="Genomic_DNA"/>
</dbReference>
<dbReference type="RefSeq" id="WP_012590851.1">
    <property type="nucleotide sequence ID" value="NC_011666.1"/>
</dbReference>
<dbReference type="SMR" id="B8EM00"/>
<dbReference type="STRING" id="395965.Msil_1836"/>
<dbReference type="KEGG" id="msl:Msil_1836"/>
<dbReference type="eggNOG" id="COG0292">
    <property type="taxonomic scope" value="Bacteria"/>
</dbReference>
<dbReference type="HOGENOM" id="CLU_123265_0_1_5"/>
<dbReference type="OrthoDB" id="9808966at2"/>
<dbReference type="Proteomes" id="UP000002257">
    <property type="component" value="Chromosome"/>
</dbReference>
<dbReference type="GO" id="GO:1990904">
    <property type="term" value="C:ribonucleoprotein complex"/>
    <property type="evidence" value="ECO:0007669"/>
    <property type="project" value="UniProtKB-KW"/>
</dbReference>
<dbReference type="GO" id="GO:0005840">
    <property type="term" value="C:ribosome"/>
    <property type="evidence" value="ECO:0007669"/>
    <property type="project" value="UniProtKB-KW"/>
</dbReference>
<dbReference type="GO" id="GO:0019843">
    <property type="term" value="F:rRNA binding"/>
    <property type="evidence" value="ECO:0007669"/>
    <property type="project" value="UniProtKB-UniRule"/>
</dbReference>
<dbReference type="GO" id="GO:0003735">
    <property type="term" value="F:structural constituent of ribosome"/>
    <property type="evidence" value="ECO:0007669"/>
    <property type="project" value="InterPro"/>
</dbReference>
<dbReference type="GO" id="GO:0000027">
    <property type="term" value="P:ribosomal large subunit assembly"/>
    <property type="evidence" value="ECO:0007669"/>
    <property type="project" value="UniProtKB-UniRule"/>
</dbReference>
<dbReference type="GO" id="GO:0006412">
    <property type="term" value="P:translation"/>
    <property type="evidence" value="ECO:0007669"/>
    <property type="project" value="InterPro"/>
</dbReference>
<dbReference type="CDD" id="cd07026">
    <property type="entry name" value="Ribosomal_L20"/>
    <property type="match status" value="1"/>
</dbReference>
<dbReference type="FunFam" id="1.10.1900.20:FF:000001">
    <property type="entry name" value="50S ribosomal protein L20"/>
    <property type="match status" value="1"/>
</dbReference>
<dbReference type="Gene3D" id="6.10.160.10">
    <property type="match status" value="1"/>
</dbReference>
<dbReference type="Gene3D" id="1.10.1900.20">
    <property type="entry name" value="Ribosomal protein L20"/>
    <property type="match status" value="1"/>
</dbReference>
<dbReference type="HAMAP" id="MF_00382">
    <property type="entry name" value="Ribosomal_bL20"/>
    <property type="match status" value="1"/>
</dbReference>
<dbReference type="InterPro" id="IPR005813">
    <property type="entry name" value="Ribosomal_bL20"/>
</dbReference>
<dbReference type="InterPro" id="IPR049946">
    <property type="entry name" value="RIBOSOMAL_L20_CS"/>
</dbReference>
<dbReference type="InterPro" id="IPR035566">
    <property type="entry name" value="Ribosomal_protein_bL20_C"/>
</dbReference>
<dbReference type="NCBIfam" id="TIGR01032">
    <property type="entry name" value="rplT_bact"/>
    <property type="match status" value="1"/>
</dbReference>
<dbReference type="PANTHER" id="PTHR10986">
    <property type="entry name" value="39S RIBOSOMAL PROTEIN L20"/>
    <property type="match status" value="1"/>
</dbReference>
<dbReference type="Pfam" id="PF00453">
    <property type="entry name" value="Ribosomal_L20"/>
    <property type="match status" value="1"/>
</dbReference>
<dbReference type="PRINTS" id="PR00062">
    <property type="entry name" value="RIBOSOMALL20"/>
</dbReference>
<dbReference type="SUPFAM" id="SSF74731">
    <property type="entry name" value="Ribosomal protein L20"/>
    <property type="match status" value="1"/>
</dbReference>
<dbReference type="PROSITE" id="PS00937">
    <property type="entry name" value="RIBOSOMAL_L20"/>
    <property type="match status" value="1"/>
</dbReference>
<protein>
    <recommendedName>
        <fullName evidence="1">Large ribosomal subunit protein bL20</fullName>
    </recommendedName>
    <alternativeName>
        <fullName evidence="2">50S ribosomal protein L20</fullName>
    </alternativeName>
</protein>
<comment type="function">
    <text evidence="1">Binds directly to 23S ribosomal RNA and is necessary for the in vitro assembly process of the 50S ribosomal subunit. It is not involved in the protein synthesizing functions of that subunit.</text>
</comment>
<comment type="similarity">
    <text evidence="1">Belongs to the bacterial ribosomal protein bL20 family.</text>
</comment>
<proteinExistence type="inferred from homology"/>
<organism>
    <name type="scientific">Methylocella silvestris (strain DSM 15510 / CIP 108128 / LMG 27833 / NCIMB 13906 / BL2)</name>
    <dbReference type="NCBI Taxonomy" id="395965"/>
    <lineage>
        <taxon>Bacteria</taxon>
        <taxon>Pseudomonadati</taxon>
        <taxon>Pseudomonadota</taxon>
        <taxon>Alphaproteobacteria</taxon>
        <taxon>Hyphomicrobiales</taxon>
        <taxon>Beijerinckiaceae</taxon>
        <taxon>Methylocella</taxon>
    </lineage>
</organism>
<sequence length="119" mass="13256">MARVKRGVTSHAKHKKTLEAAKGFYGRRKNTIRAAKAAVDRSMQYATRDRRAKKRVFRALWIQRLNAAVRECGLTYSRFIDGLAKAGVAVDRKVLSDLAITQPEAFKAIVDKAKSALPA</sequence>
<reference key="1">
    <citation type="journal article" date="2010" name="J. Bacteriol.">
        <title>Complete genome sequence of the aerobic facultative methanotroph Methylocella silvestris BL2.</title>
        <authorList>
            <person name="Chen Y."/>
            <person name="Crombie A."/>
            <person name="Rahman M.T."/>
            <person name="Dedysh S.N."/>
            <person name="Liesack W."/>
            <person name="Stott M.B."/>
            <person name="Alam M."/>
            <person name="Theisen A.R."/>
            <person name="Murrell J.C."/>
            <person name="Dunfield P.F."/>
        </authorList>
    </citation>
    <scope>NUCLEOTIDE SEQUENCE [LARGE SCALE GENOMIC DNA]</scope>
    <source>
        <strain>DSM 15510 / CIP 108128 / LMG 27833 / NCIMB 13906 / BL2</strain>
    </source>
</reference>